<keyword id="KW-0967">Endosome</keyword>
<keyword id="KW-0333">Golgi apparatus</keyword>
<keyword id="KW-0406">Ion transport</keyword>
<keyword id="KW-0472">Membrane</keyword>
<keyword id="KW-1185">Reference proteome</keyword>
<keyword id="KW-0732">Signal</keyword>
<keyword id="KW-0812">Transmembrane</keyword>
<keyword id="KW-1133">Transmembrane helix</keyword>
<keyword id="KW-0813">Transport</keyword>
<gene>
    <name evidence="5" type="primary">TMN7</name>
    <name evidence="6" type="synonym">EMP5</name>
    <name evidence="8" type="ordered locus">At3g13772</name>
    <name evidence="9" type="ORF">MMM17.20</name>
</gene>
<comment type="function">
    <text evidence="4">May play a role as effector of cellular copper homeostasis.</text>
</comment>
<comment type="subcellular location">
    <subcellularLocation>
        <location evidence="1">Endosome membrane</location>
        <topology evidence="3">Multi-pass membrane protein</topology>
    </subcellularLocation>
    <subcellularLocation>
        <location evidence="2">Golgi apparatus membrane</location>
        <topology evidence="3">Multi-pass membrane protein</topology>
    </subcellularLocation>
</comment>
<comment type="tissue specificity">
    <text evidence="4">Ubiquitous. Highly expressed in the root elongation zone.</text>
</comment>
<comment type="domain">
    <text evidence="2">The C-terminal KXD/E motif functions as a Golgi retention signal, certainly through the binding to the COP1 coatomer.</text>
</comment>
<comment type="similarity">
    <text>Belongs to the nonaspanin (TM9SF) (TC 9.A.2) family.</text>
</comment>
<evidence type="ECO:0000250" key="1">
    <source>
        <dbReference type="UniProtKB" id="P32802"/>
    </source>
</evidence>
<evidence type="ECO:0000250" key="2">
    <source>
        <dbReference type="UniProtKB" id="Q940G0"/>
    </source>
</evidence>
<evidence type="ECO:0000255" key="3"/>
<evidence type="ECO:0000269" key="4">
    <source>
    </source>
</evidence>
<evidence type="ECO:0000303" key="5">
    <source>
    </source>
</evidence>
<evidence type="ECO:0000303" key="6">
    <source>
    </source>
</evidence>
<evidence type="ECO:0000305" key="7"/>
<evidence type="ECO:0000312" key="8">
    <source>
        <dbReference type="Araport" id="AT3G13772"/>
    </source>
</evidence>
<evidence type="ECO:0000312" key="9">
    <source>
        <dbReference type="EMBL" id="BAB01926.1"/>
    </source>
</evidence>
<protein>
    <recommendedName>
        <fullName evidence="7">Transmembrane 9 superfamily member 7</fullName>
    </recommendedName>
    <alternativeName>
        <fullName evidence="6">Endomembrane protein 5</fullName>
    </alternativeName>
    <alternativeName>
        <fullName evidence="5">Transmembrane nine protein 7</fullName>
        <shortName evidence="5">AtTMN7</shortName>
    </alternativeName>
</protein>
<accession>Q9LIC2</accession>
<accession>Q0WPY4</accession>
<dbReference type="EMBL" id="AP001307">
    <property type="protein sequence ID" value="BAB01926.1"/>
    <property type="molecule type" value="Genomic_DNA"/>
</dbReference>
<dbReference type="EMBL" id="CP002686">
    <property type="protein sequence ID" value="AEE75410.1"/>
    <property type="molecule type" value="Genomic_DNA"/>
</dbReference>
<dbReference type="EMBL" id="AK228926">
    <property type="protein sequence ID" value="BAF00815.1"/>
    <property type="molecule type" value="mRNA"/>
</dbReference>
<dbReference type="RefSeq" id="NP_187991.1">
    <property type="nucleotide sequence ID" value="NM_112228.3"/>
</dbReference>
<dbReference type="SMR" id="Q9LIC2"/>
<dbReference type="BioGRID" id="5921">
    <property type="interactions" value="2"/>
</dbReference>
<dbReference type="FunCoup" id="Q9LIC2">
    <property type="interactions" value="5637"/>
</dbReference>
<dbReference type="STRING" id="3702.Q9LIC2"/>
<dbReference type="TCDB" id="8.A.68.1.2">
    <property type="family name" value="the endomembrane protein-70 (emp70) family"/>
</dbReference>
<dbReference type="PaxDb" id="3702-AT3G13772.1"/>
<dbReference type="ProteomicsDB" id="234434"/>
<dbReference type="EnsemblPlants" id="AT3G13772.1">
    <property type="protein sequence ID" value="AT3G13772.1"/>
    <property type="gene ID" value="AT3G13772"/>
</dbReference>
<dbReference type="GeneID" id="820587"/>
<dbReference type="Gramene" id="AT3G13772.1">
    <property type="protein sequence ID" value="AT3G13772.1"/>
    <property type="gene ID" value="AT3G13772"/>
</dbReference>
<dbReference type="KEGG" id="ath:AT3G13772"/>
<dbReference type="Araport" id="AT3G13772"/>
<dbReference type="TAIR" id="AT3G13772">
    <property type="gene designation" value="TMN7"/>
</dbReference>
<dbReference type="eggNOG" id="KOG1278">
    <property type="taxonomic scope" value="Eukaryota"/>
</dbReference>
<dbReference type="HOGENOM" id="CLU_010714_4_1_1"/>
<dbReference type="InParanoid" id="Q9LIC2"/>
<dbReference type="OMA" id="EDQPCKI"/>
<dbReference type="OrthoDB" id="1666796at2759"/>
<dbReference type="PhylomeDB" id="Q9LIC2"/>
<dbReference type="CD-CODE" id="4299E36E">
    <property type="entry name" value="Nucleolus"/>
</dbReference>
<dbReference type="PRO" id="PR:Q9LIC2"/>
<dbReference type="Proteomes" id="UP000006548">
    <property type="component" value="Chromosome 3"/>
</dbReference>
<dbReference type="ExpressionAtlas" id="Q9LIC2">
    <property type="expression patterns" value="baseline and differential"/>
</dbReference>
<dbReference type="GO" id="GO:0005737">
    <property type="term" value="C:cytoplasm"/>
    <property type="evidence" value="ECO:0000314"/>
    <property type="project" value="TAIR"/>
</dbReference>
<dbReference type="GO" id="GO:0005768">
    <property type="term" value="C:endosome"/>
    <property type="evidence" value="ECO:0007005"/>
    <property type="project" value="TAIR"/>
</dbReference>
<dbReference type="GO" id="GO:0010008">
    <property type="term" value="C:endosome membrane"/>
    <property type="evidence" value="ECO:0007669"/>
    <property type="project" value="UniProtKB-SubCell"/>
</dbReference>
<dbReference type="GO" id="GO:0005794">
    <property type="term" value="C:Golgi apparatus"/>
    <property type="evidence" value="ECO:0007005"/>
    <property type="project" value="TAIR"/>
</dbReference>
<dbReference type="GO" id="GO:0000139">
    <property type="term" value="C:Golgi membrane"/>
    <property type="evidence" value="ECO:0007669"/>
    <property type="project" value="UniProtKB-SubCell"/>
</dbReference>
<dbReference type="GO" id="GO:0000138">
    <property type="term" value="C:Golgi trans cisterna"/>
    <property type="evidence" value="ECO:0007005"/>
    <property type="project" value="TAIR"/>
</dbReference>
<dbReference type="GO" id="GO:0005634">
    <property type="term" value="C:nucleus"/>
    <property type="evidence" value="ECO:0000314"/>
    <property type="project" value="TAIR"/>
</dbReference>
<dbReference type="GO" id="GO:0000325">
    <property type="term" value="C:plant-type vacuole"/>
    <property type="evidence" value="ECO:0007005"/>
    <property type="project" value="TAIR"/>
</dbReference>
<dbReference type="GO" id="GO:0005802">
    <property type="term" value="C:trans-Golgi network"/>
    <property type="evidence" value="ECO:0007005"/>
    <property type="project" value="TAIR"/>
</dbReference>
<dbReference type="GO" id="GO:0006878">
    <property type="term" value="P:intracellular copper ion homeostasis"/>
    <property type="evidence" value="ECO:0000314"/>
    <property type="project" value="TAIR"/>
</dbReference>
<dbReference type="GO" id="GO:0006882">
    <property type="term" value="P:intracellular zinc ion homeostasis"/>
    <property type="evidence" value="ECO:0000314"/>
    <property type="project" value="TAIR"/>
</dbReference>
<dbReference type="GO" id="GO:0006811">
    <property type="term" value="P:monoatomic ion transport"/>
    <property type="evidence" value="ECO:0007669"/>
    <property type="project" value="UniProtKB-KW"/>
</dbReference>
<dbReference type="InterPro" id="IPR004240">
    <property type="entry name" value="EMP70"/>
</dbReference>
<dbReference type="InterPro" id="IPR036259">
    <property type="entry name" value="MFS_trans_sf"/>
</dbReference>
<dbReference type="PANTHER" id="PTHR10766:SF111">
    <property type="entry name" value="TRANSMEMBRANE 9 SUPERFAMILY MEMBER 2"/>
    <property type="match status" value="1"/>
</dbReference>
<dbReference type="PANTHER" id="PTHR10766">
    <property type="entry name" value="TRANSMEMBRANE 9 SUPERFAMILY PROTEIN"/>
    <property type="match status" value="1"/>
</dbReference>
<dbReference type="Pfam" id="PF02990">
    <property type="entry name" value="EMP70"/>
    <property type="match status" value="1"/>
</dbReference>
<dbReference type="SUPFAM" id="SSF103473">
    <property type="entry name" value="MFS general substrate transporter"/>
    <property type="match status" value="1"/>
</dbReference>
<sequence length="641" mass="74234">MKKTKGSSFRFYATLLLSFLSFSLSRAFYLPGVAPRDFQKGDPLYVKVNKLSSTKTQLPYDYYYLNYCKPPKILNNAENLGEVLRGDRIENSVYTFQMLEDQPCKVGCRVKLNADSTKNFKEKIDDEYRANMILDNLPVAVLRQRRDGSQSTTYEHGFRVGFKGSYEGSKEEKYFIHNHLSFRVMYHRDQESDSARIVGFEVTPNSILHEYKEWDEKNPQLTTCNKDTKNLIQGNTVPQEVEQGKEIVFTYDVSFKESEIKWASRWDTYLLMNDDQIHWFSIINSLMIVLFLSGMVAMIMMRTLYKDISNYNQLETQDEAQEETGWKLVHGDVFRPPVNSGLLCVYVGTGVQIFGMSLVTMMFALLGFLSPSNRGGLMTAMVLLWVFMGIFAGYSSSRLHKMFKGNKWKRMTLKTAFMFPGILFAIFFVLNALIWGEQSSGAIPFGTMFALFCLWFGISVPLVFVGSYLGYKKPAIEDPVKTNKIPRQVPEQPWYMKPVFSILIGGILPFGAVFIELFFILTSIWLNQFYYIFGFLFIVFLILIVTCAEITVVLCYFQLCSEDYNWWWRAYLTAGSSAFYLFLYSIFYFFTKLEITKLVSGMLYFGYMIIISYAFFVLTGTIGFYACFWFVRKIYSSVKID</sequence>
<name>TMN7_ARATH</name>
<feature type="signal peptide" evidence="3">
    <location>
        <begin position="1"/>
        <end position="27"/>
    </location>
</feature>
<feature type="chain" id="PRO_0000431264" description="Transmembrane 9 superfamily member 7" evidence="3">
    <location>
        <begin position="28"/>
        <end position="641"/>
    </location>
</feature>
<feature type="topological domain" description="Lumenal" evidence="7">
    <location>
        <begin position="28"/>
        <end position="278"/>
    </location>
</feature>
<feature type="transmembrane region" description="Helical; Name=1" evidence="3">
    <location>
        <begin position="279"/>
        <end position="299"/>
    </location>
</feature>
<feature type="topological domain" description="Cytoplasmic" evidence="7">
    <location>
        <begin position="300"/>
        <end position="348"/>
    </location>
</feature>
<feature type="transmembrane region" description="Helical; Name=2" evidence="3">
    <location>
        <begin position="349"/>
        <end position="369"/>
    </location>
</feature>
<feature type="topological domain" description="Lumenal" evidence="7">
    <location>
        <begin position="370"/>
        <end position="374"/>
    </location>
</feature>
<feature type="transmembrane region" description="Helical; Name=3" evidence="3">
    <location>
        <begin position="375"/>
        <end position="395"/>
    </location>
</feature>
<feature type="topological domain" description="Cytoplasmic" evidence="7">
    <location>
        <begin position="396"/>
        <end position="415"/>
    </location>
</feature>
<feature type="transmembrane region" description="Helical; Name=4" evidence="3">
    <location>
        <begin position="416"/>
        <end position="436"/>
    </location>
</feature>
<feature type="topological domain" description="Lumenal" evidence="7">
    <location>
        <begin position="437"/>
        <end position="444"/>
    </location>
</feature>
<feature type="transmembrane region" description="Helical; Name=5" evidence="3">
    <location>
        <begin position="445"/>
        <end position="465"/>
    </location>
</feature>
<feature type="topological domain" description="Cytoplasmic" evidence="7">
    <location>
        <begin position="466"/>
        <end position="499"/>
    </location>
</feature>
<feature type="transmembrane region" description="Helical; Name=6" evidence="3">
    <location>
        <begin position="500"/>
        <end position="520"/>
    </location>
</feature>
<feature type="topological domain" description="Lumenal" evidence="7">
    <location>
        <begin position="521"/>
        <end position="531"/>
    </location>
</feature>
<feature type="transmembrane region" description="Helical; Name=7" evidence="3">
    <location>
        <begin position="532"/>
        <end position="552"/>
    </location>
</feature>
<feature type="topological domain" description="Cytoplasmic" evidence="7">
    <location>
        <begin position="553"/>
        <end position="569"/>
    </location>
</feature>
<feature type="transmembrane region" description="Helical; Name=8" evidence="3">
    <location>
        <begin position="570"/>
        <end position="590"/>
    </location>
</feature>
<feature type="topological domain" description="Lumenal" evidence="7">
    <location>
        <begin position="591"/>
        <end position="597"/>
    </location>
</feature>
<feature type="transmembrane region" description="Helical; Name=9" evidence="3">
    <location>
        <begin position="598"/>
        <end position="618"/>
    </location>
</feature>
<feature type="topological domain" description="Cytoplasmic" evidence="7">
    <location>
        <begin position="619"/>
        <end position="641"/>
    </location>
</feature>
<feature type="short sequence motif" description="Endoplasmic reticulum export signal" evidence="2">
    <location>
        <begin position="630"/>
        <end position="635"/>
    </location>
</feature>
<feature type="short sequence motif" description="Golgi retention signal" evidence="2">
    <location>
        <begin position="639"/>
        <end position="641"/>
    </location>
</feature>
<reference key="1">
    <citation type="journal article" date="2000" name="DNA Res.">
        <title>Structural analysis of Arabidopsis thaliana chromosome 3. II. Sequence features of the 4,251,695 bp regions covered by 90 P1, TAC and BAC clones.</title>
        <authorList>
            <person name="Kaneko T."/>
            <person name="Katoh T."/>
            <person name="Sato S."/>
            <person name="Nakamura Y."/>
            <person name="Asamizu E."/>
            <person name="Tabata S."/>
        </authorList>
    </citation>
    <scope>NUCLEOTIDE SEQUENCE [LARGE SCALE GENOMIC DNA]</scope>
    <source>
        <strain>cv. Columbia</strain>
    </source>
</reference>
<reference key="2">
    <citation type="journal article" date="2017" name="Plant J.">
        <title>Araport11: a complete reannotation of the Arabidopsis thaliana reference genome.</title>
        <authorList>
            <person name="Cheng C.Y."/>
            <person name="Krishnakumar V."/>
            <person name="Chan A.P."/>
            <person name="Thibaud-Nissen F."/>
            <person name="Schobel S."/>
            <person name="Town C.D."/>
        </authorList>
    </citation>
    <scope>GENOME REANNOTATION</scope>
    <source>
        <strain>cv. Columbia</strain>
    </source>
</reference>
<reference key="3">
    <citation type="submission" date="2006-07" db="EMBL/GenBank/DDBJ databases">
        <title>Large-scale analysis of RIKEN Arabidopsis full-length (RAFL) cDNAs.</title>
        <authorList>
            <person name="Totoki Y."/>
            <person name="Seki M."/>
            <person name="Ishida J."/>
            <person name="Nakajima M."/>
            <person name="Enju A."/>
            <person name="Kamiya A."/>
            <person name="Narusaka M."/>
            <person name="Shin-i T."/>
            <person name="Nakagawa M."/>
            <person name="Sakamoto N."/>
            <person name="Oishi K."/>
            <person name="Kohara Y."/>
            <person name="Kobayashi M."/>
            <person name="Toyoda A."/>
            <person name="Sakaki Y."/>
            <person name="Sakurai T."/>
            <person name="Iida K."/>
            <person name="Akiyama K."/>
            <person name="Satou M."/>
            <person name="Toyoda T."/>
            <person name="Konagaya A."/>
            <person name="Carninci P."/>
            <person name="Kawai J."/>
            <person name="Hayashizaki Y."/>
            <person name="Shinozaki K."/>
        </authorList>
    </citation>
    <scope>NUCLEOTIDE SEQUENCE [LARGE SCALE MRNA] OF 280-641</scope>
    <source>
        <strain>cv. Columbia</strain>
    </source>
</reference>
<reference key="4">
    <citation type="journal article" date="2010" name="Physiol. Plantarum">
        <title>Transmembrane nine proteins in yeast and Arabidopsis affect cellular metal contents without changing vacuolar morphology.</title>
        <authorList>
            <person name="Hegelund J.N."/>
            <person name="Jahn T.P."/>
            <person name="Baekgaard L."/>
            <person name="Palmgren M.G."/>
            <person name="Schjoerring J.K."/>
        </authorList>
    </citation>
    <scope>GENE FAMILY</scope>
    <scope>NOMENCLATURE</scope>
    <scope>FUNCTION</scope>
    <scope>TISSUE SPECIFICITY</scope>
</reference>
<reference key="5">
    <citation type="journal article" date="2012" name="Plant Cell">
        <title>The Golgi-localized Arabidopsis endomembrane protein12 contains both endoplasmic reticulum export and Golgi retention signals at its C terminus.</title>
        <authorList>
            <person name="Gao C."/>
            <person name="Yu C.K."/>
            <person name="Qu S."/>
            <person name="San M.W."/>
            <person name="Li K.Y."/>
            <person name="Lo S.W."/>
            <person name="Jiang L."/>
        </authorList>
    </citation>
    <scope>GENE FAMILY</scope>
    <scope>NOMENCLATURE</scope>
</reference>
<proteinExistence type="evidence at transcript level"/>
<organism>
    <name type="scientific">Arabidopsis thaliana</name>
    <name type="common">Mouse-ear cress</name>
    <dbReference type="NCBI Taxonomy" id="3702"/>
    <lineage>
        <taxon>Eukaryota</taxon>
        <taxon>Viridiplantae</taxon>
        <taxon>Streptophyta</taxon>
        <taxon>Embryophyta</taxon>
        <taxon>Tracheophyta</taxon>
        <taxon>Spermatophyta</taxon>
        <taxon>Magnoliopsida</taxon>
        <taxon>eudicotyledons</taxon>
        <taxon>Gunneridae</taxon>
        <taxon>Pentapetalae</taxon>
        <taxon>rosids</taxon>
        <taxon>malvids</taxon>
        <taxon>Brassicales</taxon>
        <taxon>Brassicaceae</taxon>
        <taxon>Camelineae</taxon>
        <taxon>Arabidopsis</taxon>
    </lineage>
</organism>